<dbReference type="EMBL" id="AL132979">
    <property type="protein sequence ID" value="CAB62438.1"/>
    <property type="molecule type" value="Genomic_DNA"/>
</dbReference>
<dbReference type="EMBL" id="CP002686">
    <property type="protein sequence ID" value="AEE78697.1"/>
    <property type="molecule type" value="Genomic_DNA"/>
</dbReference>
<dbReference type="PIR" id="T46146">
    <property type="entry name" value="T46146"/>
</dbReference>
<dbReference type="RefSeq" id="NP_190638.1">
    <property type="nucleotide sequence ID" value="NM_114929.3"/>
</dbReference>
<dbReference type="SMR" id="Q9SCQ7"/>
<dbReference type="FunCoup" id="Q9SCQ7">
    <property type="interactions" value="538"/>
</dbReference>
<dbReference type="STRING" id="3702.Q9SCQ7"/>
<dbReference type="PaxDb" id="3702-AT3G50690.1"/>
<dbReference type="ProteomicsDB" id="244988"/>
<dbReference type="EnsemblPlants" id="AT3G50690.1">
    <property type="protein sequence ID" value="AT3G50690.1"/>
    <property type="gene ID" value="AT3G50690"/>
</dbReference>
<dbReference type="GeneID" id="824233"/>
<dbReference type="Gramene" id="AT3G50690.1">
    <property type="protein sequence ID" value="AT3G50690.1"/>
    <property type="gene ID" value="AT3G50690"/>
</dbReference>
<dbReference type="KEGG" id="ath:AT3G50690"/>
<dbReference type="Araport" id="AT3G50690"/>
<dbReference type="TAIR" id="AT3G50690"/>
<dbReference type="eggNOG" id="KOG2739">
    <property type="taxonomic scope" value="Eukaryota"/>
</dbReference>
<dbReference type="HOGENOM" id="CLU_022686_0_0_1"/>
<dbReference type="InParanoid" id="Q9SCQ7"/>
<dbReference type="OMA" id="DRPFRMT"/>
<dbReference type="PRO" id="PR:Q9SCQ7"/>
<dbReference type="Proteomes" id="UP000006548">
    <property type="component" value="Chromosome 3"/>
</dbReference>
<dbReference type="ExpressionAtlas" id="Q9SCQ7">
    <property type="expression patterns" value="baseline and differential"/>
</dbReference>
<dbReference type="FunFam" id="3.80.10.10:FF:000131">
    <property type="entry name" value="acidic leucine-rich nuclear phosphoprotein 32-related protein-like"/>
    <property type="match status" value="1"/>
</dbReference>
<dbReference type="Gene3D" id="3.80.10.10">
    <property type="entry name" value="Ribonuclease Inhibitor"/>
    <property type="match status" value="1"/>
</dbReference>
<dbReference type="InterPro" id="IPR045081">
    <property type="entry name" value="AN32"/>
</dbReference>
<dbReference type="InterPro" id="IPR001611">
    <property type="entry name" value="Leu-rich_rpt"/>
</dbReference>
<dbReference type="InterPro" id="IPR032675">
    <property type="entry name" value="LRR_dom_sf"/>
</dbReference>
<dbReference type="PANTHER" id="PTHR11375">
    <property type="entry name" value="ACIDIC LEUCINE-RICH NUCLEAR PHOSPHOPROTEIN 32"/>
    <property type="match status" value="1"/>
</dbReference>
<dbReference type="PANTHER" id="PTHR11375:SF0">
    <property type="entry name" value="ACIDIC LEUCINE-RICH NUCLEAR PHOSPHOPROTEIN 32 FAMILY MEMBER A"/>
    <property type="match status" value="1"/>
</dbReference>
<dbReference type="Pfam" id="PF14580">
    <property type="entry name" value="LRR_9"/>
    <property type="match status" value="1"/>
</dbReference>
<dbReference type="SUPFAM" id="SSF52058">
    <property type="entry name" value="L domain-like"/>
    <property type="match status" value="1"/>
</dbReference>
<dbReference type="PROSITE" id="PS51450">
    <property type="entry name" value="LRR"/>
    <property type="match status" value="4"/>
</dbReference>
<reference key="1">
    <citation type="journal article" date="2000" name="Nature">
        <title>Sequence and analysis of chromosome 3 of the plant Arabidopsis thaliana.</title>
        <authorList>
            <person name="Salanoubat M."/>
            <person name="Lemcke K."/>
            <person name="Rieger M."/>
            <person name="Ansorge W."/>
            <person name="Unseld M."/>
            <person name="Fartmann B."/>
            <person name="Valle G."/>
            <person name="Bloecker H."/>
            <person name="Perez-Alonso M."/>
            <person name="Obermaier B."/>
            <person name="Delseny M."/>
            <person name="Boutry M."/>
            <person name="Grivell L.A."/>
            <person name="Mache R."/>
            <person name="Puigdomenech P."/>
            <person name="De Simone V."/>
            <person name="Choisne N."/>
            <person name="Artiguenave F."/>
            <person name="Robert C."/>
            <person name="Brottier P."/>
            <person name="Wincker P."/>
            <person name="Cattolico L."/>
            <person name="Weissenbach J."/>
            <person name="Saurin W."/>
            <person name="Quetier F."/>
            <person name="Schaefer M."/>
            <person name="Mueller-Auer S."/>
            <person name="Gabel C."/>
            <person name="Fuchs M."/>
            <person name="Benes V."/>
            <person name="Wurmbach E."/>
            <person name="Drzonek H."/>
            <person name="Erfle H."/>
            <person name="Jordan N."/>
            <person name="Bangert S."/>
            <person name="Wiedelmann R."/>
            <person name="Kranz H."/>
            <person name="Voss H."/>
            <person name="Holland R."/>
            <person name="Brandt P."/>
            <person name="Nyakatura G."/>
            <person name="Vezzi A."/>
            <person name="D'Angelo M."/>
            <person name="Pallavicini A."/>
            <person name="Toppo S."/>
            <person name="Simionati B."/>
            <person name="Conrad A."/>
            <person name="Hornischer K."/>
            <person name="Kauer G."/>
            <person name="Loehnert T.-H."/>
            <person name="Nordsiek G."/>
            <person name="Reichelt J."/>
            <person name="Scharfe M."/>
            <person name="Schoen O."/>
            <person name="Bargues M."/>
            <person name="Terol J."/>
            <person name="Climent J."/>
            <person name="Navarro P."/>
            <person name="Collado C."/>
            <person name="Perez-Perez A."/>
            <person name="Ottenwaelder B."/>
            <person name="Duchemin D."/>
            <person name="Cooke R."/>
            <person name="Laudie M."/>
            <person name="Berger-Llauro C."/>
            <person name="Purnelle B."/>
            <person name="Masuy D."/>
            <person name="de Haan M."/>
            <person name="Maarse A.C."/>
            <person name="Alcaraz J.-P."/>
            <person name="Cottet A."/>
            <person name="Casacuberta E."/>
            <person name="Monfort A."/>
            <person name="Argiriou A."/>
            <person name="Flores M."/>
            <person name="Liguori R."/>
            <person name="Vitale D."/>
            <person name="Mannhaupt G."/>
            <person name="Haase D."/>
            <person name="Schoof H."/>
            <person name="Rudd S."/>
            <person name="Zaccaria P."/>
            <person name="Mewes H.-W."/>
            <person name="Mayer K.F.X."/>
            <person name="Kaul S."/>
            <person name="Town C.D."/>
            <person name="Koo H.L."/>
            <person name="Tallon L.J."/>
            <person name="Jenkins J."/>
            <person name="Rooney T."/>
            <person name="Rizzo M."/>
            <person name="Walts A."/>
            <person name="Utterback T."/>
            <person name="Fujii C.Y."/>
            <person name="Shea T.P."/>
            <person name="Creasy T.H."/>
            <person name="Haas B."/>
            <person name="Maiti R."/>
            <person name="Wu D."/>
            <person name="Peterson J."/>
            <person name="Van Aken S."/>
            <person name="Pai G."/>
            <person name="Militscher J."/>
            <person name="Sellers P."/>
            <person name="Gill J.E."/>
            <person name="Feldblyum T.V."/>
            <person name="Preuss D."/>
            <person name="Lin X."/>
            <person name="Nierman W.C."/>
            <person name="Salzberg S.L."/>
            <person name="White O."/>
            <person name="Venter J.C."/>
            <person name="Fraser C.M."/>
            <person name="Kaneko T."/>
            <person name="Nakamura Y."/>
            <person name="Sato S."/>
            <person name="Kato T."/>
            <person name="Asamizu E."/>
            <person name="Sasamoto S."/>
            <person name="Kimura T."/>
            <person name="Idesawa K."/>
            <person name="Kawashima K."/>
            <person name="Kishida Y."/>
            <person name="Kiyokawa C."/>
            <person name="Kohara M."/>
            <person name="Matsumoto M."/>
            <person name="Matsuno A."/>
            <person name="Muraki A."/>
            <person name="Nakayama S."/>
            <person name="Nakazaki N."/>
            <person name="Shinpo S."/>
            <person name="Takeuchi C."/>
            <person name="Wada T."/>
            <person name="Watanabe A."/>
            <person name="Yamada M."/>
            <person name="Yasuda M."/>
            <person name="Tabata S."/>
        </authorList>
    </citation>
    <scope>NUCLEOTIDE SEQUENCE [LARGE SCALE GENOMIC DNA]</scope>
    <source>
        <strain>cv. Columbia</strain>
    </source>
</reference>
<reference key="2">
    <citation type="journal article" date="2017" name="Plant J.">
        <title>Araport11: a complete reannotation of the Arabidopsis thaliana reference genome.</title>
        <authorList>
            <person name="Cheng C.Y."/>
            <person name="Krishnakumar V."/>
            <person name="Chan A.P."/>
            <person name="Thibaud-Nissen F."/>
            <person name="Schobel S."/>
            <person name="Town C.D."/>
        </authorList>
    </citation>
    <scope>GENOME REANNOTATION</scope>
    <source>
        <strain>cv. Columbia</strain>
    </source>
</reference>
<reference key="3">
    <citation type="journal article" date="2005" name="Cerebellum">
        <title>The Anp32 family of proteins containing leucine-rich repeats.</title>
        <authorList>
            <person name="Matilla A."/>
            <person name="Radrizzani M."/>
        </authorList>
    </citation>
    <scope>GENE FAMILY</scope>
    <scope>NOMENCLATURE</scope>
</reference>
<accession>Q9SCQ7</accession>
<name>AN32_ARATH</name>
<organism>
    <name type="scientific">Arabidopsis thaliana</name>
    <name type="common">Mouse-ear cress</name>
    <dbReference type="NCBI Taxonomy" id="3702"/>
    <lineage>
        <taxon>Eukaryota</taxon>
        <taxon>Viridiplantae</taxon>
        <taxon>Streptophyta</taxon>
        <taxon>Embryophyta</taxon>
        <taxon>Tracheophyta</taxon>
        <taxon>Spermatophyta</taxon>
        <taxon>Magnoliopsida</taxon>
        <taxon>eudicotyledons</taxon>
        <taxon>Gunneridae</taxon>
        <taxon>Pentapetalae</taxon>
        <taxon>rosids</taxon>
        <taxon>malvids</taxon>
        <taxon>Brassicales</taxon>
        <taxon>Brassicaceae</taxon>
        <taxon>Camelineae</taxon>
        <taxon>Arabidopsis</taxon>
    </lineage>
</organism>
<gene>
    <name type="ordered locus">At3g50690</name>
    <name type="ORF">T3A5.70</name>
</gene>
<evidence type="ECO:0000256" key="1">
    <source>
        <dbReference type="SAM" id="MobiDB-lite"/>
    </source>
</evidence>
<evidence type="ECO:0000305" key="2"/>
<protein>
    <recommendedName>
        <fullName>Acidic leucine-rich nuclear phosphoprotein 32-related protein</fullName>
    </recommendedName>
    <alternativeName>
        <fullName>ANP32/acidic nuclear phosphoprotein-like protein</fullName>
    </alternativeName>
</protein>
<proteinExistence type="evidence at transcript level"/>
<feature type="chain" id="PRO_0000240198" description="Acidic leucine-rich nuclear phosphoprotein 32-related protein">
    <location>
        <begin position="1"/>
        <end position="447"/>
    </location>
</feature>
<feature type="repeat" description="LRR 1">
    <location>
        <begin position="49"/>
        <end position="70"/>
    </location>
</feature>
<feature type="repeat" description="LRR 2">
    <location>
        <begin position="71"/>
        <end position="90"/>
    </location>
</feature>
<feature type="repeat" description="LRR 3">
    <location>
        <begin position="96"/>
        <end position="117"/>
    </location>
</feature>
<feature type="domain" description="LRRCT">
    <location>
        <begin position="129"/>
        <end position="167"/>
    </location>
</feature>
<feature type="region of interest" description="Disordered" evidence="1">
    <location>
        <begin position="155"/>
        <end position="447"/>
    </location>
</feature>
<feature type="compositionally biased region" description="Acidic residues" evidence="1">
    <location>
        <begin position="163"/>
        <end position="194"/>
    </location>
</feature>
<feature type="compositionally biased region" description="Acidic residues" evidence="1">
    <location>
        <begin position="215"/>
        <end position="231"/>
    </location>
</feature>
<feature type="compositionally biased region" description="Polar residues" evidence="1">
    <location>
        <begin position="232"/>
        <end position="242"/>
    </location>
</feature>
<feature type="compositionally biased region" description="Acidic residues" evidence="1">
    <location>
        <begin position="256"/>
        <end position="277"/>
    </location>
</feature>
<feature type="compositionally biased region" description="Acidic residues" evidence="1">
    <location>
        <begin position="284"/>
        <end position="309"/>
    </location>
</feature>
<feature type="compositionally biased region" description="Acidic residues" evidence="1">
    <location>
        <begin position="336"/>
        <end position="374"/>
    </location>
</feature>
<feature type="compositionally biased region" description="Acidic residues" evidence="1">
    <location>
        <begin position="397"/>
        <end position="415"/>
    </location>
</feature>
<feature type="compositionally biased region" description="Acidic residues" evidence="1">
    <location>
        <begin position="433"/>
        <end position="447"/>
    </location>
</feature>
<keyword id="KW-0433">Leucine-rich repeat</keyword>
<keyword id="KW-1185">Reference proteome</keyword>
<keyword id="KW-0677">Repeat</keyword>
<sequence length="447" mass="49565">MDEIWERAVEAALDGQTDRLATRTLTLDGAVKCVQGRLPPPSVLEKFQNLQHLSVANIGVSSLEQFPRLGNLQKLILSDNRITVGLEFLVEAGLDSFCDLDLSNNRIQFVEDLAPLAELKLVSLDLYECPVTRLKDYRSRVFGLIKTLKYLDKTDAEGNERPESDDEDDEEDEEDEEEEEEGDEEDPGSGEIDGDERAEAPRMSNGHSERVDGVVDVDEDEESDAEDDESEQATGVNGTSYRANGFRLEAVNGEEVREDDGDDSESGEEEVGEDNDVVEVHEIEDSENEEDGVDDEEDDEEDEEEEEVDNADRGLGGSGSTSRLMNAGEIDGHEQGDDDEDGDGETGEDDQGVEDDGEFADEDDDVEEEDEESGEGYLVQPVSQVEDHDAVGNDIEPINEDNDPDEEEEVEDDLPIPDQSLASSSRPKRKRDDDDDGEDDDDDDEER</sequence>
<comment type="similarity">
    <text evidence="2">Belongs to the ANP32 family.</text>
</comment>